<accession>Q8NWV8</accession>
<sequence length="304" mass="33293">MSNVLELTIPASTANLGVGFDSIGMALDKFLHLSVKETSGTKWEYIFHDDASKQLPTDETNFIYHVAQQVASKYSVDLPNLCIEMRSDIPLARGLGSSASALVGAIYIANYFGDIQLSKHEVLQLATEIEGHPDNVAPTIYGGLIAGYYNDVSKETSVAHIDIPDVDVIVTIPTYELKTEASRRALPQKLTHSEAVKSSAISNTMICALAQHNYELAGKLMQQDGFHEPYRQHLIAEFDEVKTIAIQHNAYATVISGAGPTILIFSRKENSGELVRSLNSQVVSCHSELVDINISGVKERIVYQ</sequence>
<reference key="1">
    <citation type="journal article" date="2002" name="Lancet">
        <title>Genome and virulence determinants of high virulence community-acquired MRSA.</title>
        <authorList>
            <person name="Baba T."/>
            <person name="Takeuchi F."/>
            <person name="Kuroda M."/>
            <person name="Yuzawa H."/>
            <person name="Aoki K."/>
            <person name="Oguchi A."/>
            <person name="Nagai Y."/>
            <person name="Iwama N."/>
            <person name="Asano K."/>
            <person name="Naimi T."/>
            <person name="Kuroda H."/>
            <person name="Cui L."/>
            <person name="Yamamoto K."/>
            <person name="Hiramatsu K."/>
        </authorList>
    </citation>
    <scope>NUCLEOTIDE SEQUENCE [LARGE SCALE GENOMIC DNA]</scope>
    <source>
        <strain>MW2</strain>
    </source>
</reference>
<protein>
    <recommendedName>
        <fullName evidence="1">Homoserine kinase</fullName>
        <shortName evidence="1">HK</shortName>
        <shortName evidence="1">HSK</shortName>
        <ecNumber evidence="1">2.7.1.39</ecNumber>
    </recommendedName>
</protein>
<keyword id="KW-0028">Amino-acid biosynthesis</keyword>
<keyword id="KW-0067">ATP-binding</keyword>
<keyword id="KW-0963">Cytoplasm</keyword>
<keyword id="KW-0418">Kinase</keyword>
<keyword id="KW-0547">Nucleotide-binding</keyword>
<keyword id="KW-0791">Threonine biosynthesis</keyword>
<keyword id="KW-0808">Transferase</keyword>
<dbReference type="EC" id="2.7.1.39" evidence="1"/>
<dbReference type="EMBL" id="BA000033">
    <property type="protein sequence ID" value="BAB95082.1"/>
    <property type="molecule type" value="Genomic_DNA"/>
</dbReference>
<dbReference type="RefSeq" id="WP_000073182.1">
    <property type="nucleotide sequence ID" value="NC_003923.1"/>
</dbReference>
<dbReference type="SMR" id="Q8NWV8"/>
<dbReference type="KEGG" id="sam:MW1217"/>
<dbReference type="HOGENOM" id="CLU_041243_0_0_9"/>
<dbReference type="UniPathway" id="UPA00050">
    <property type="reaction ID" value="UER00064"/>
</dbReference>
<dbReference type="GO" id="GO:0005737">
    <property type="term" value="C:cytoplasm"/>
    <property type="evidence" value="ECO:0007669"/>
    <property type="project" value="UniProtKB-SubCell"/>
</dbReference>
<dbReference type="GO" id="GO:0005524">
    <property type="term" value="F:ATP binding"/>
    <property type="evidence" value="ECO:0007669"/>
    <property type="project" value="UniProtKB-UniRule"/>
</dbReference>
<dbReference type="GO" id="GO:0004413">
    <property type="term" value="F:homoserine kinase activity"/>
    <property type="evidence" value="ECO:0007669"/>
    <property type="project" value="UniProtKB-UniRule"/>
</dbReference>
<dbReference type="GO" id="GO:0009088">
    <property type="term" value="P:threonine biosynthetic process"/>
    <property type="evidence" value="ECO:0007669"/>
    <property type="project" value="UniProtKB-UniRule"/>
</dbReference>
<dbReference type="Gene3D" id="3.30.230.10">
    <property type="match status" value="1"/>
</dbReference>
<dbReference type="Gene3D" id="3.30.70.890">
    <property type="entry name" value="GHMP kinase, C-terminal domain"/>
    <property type="match status" value="1"/>
</dbReference>
<dbReference type="HAMAP" id="MF_00384">
    <property type="entry name" value="Homoser_kinase"/>
    <property type="match status" value="1"/>
</dbReference>
<dbReference type="InterPro" id="IPR013750">
    <property type="entry name" value="GHMP_kinase_C_dom"/>
</dbReference>
<dbReference type="InterPro" id="IPR036554">
    <property type="entry name" value="GHMP_kinase_C_sf"/>
</dbReference>
<dbReference type="InterPro" id="IPR006204">
    <property type="entry name" value="GHMP_kinase_N_dom"/>
</dbReference>
<dbReference type="InterPro" id="IPR006203">
    <property type="entry name" value="GHMP_knse_ATP-bd_CS"/>
</dbReference>
<dbReference type="InterPro" id="IPR000870">
    <property type="entry name" value="Homoserine_kinase"/>
</dbReference>
<dbReference type="InterPro" id="IPR020568">
    <property type="entry name" value="Ribosomal_Su5_D2-typ_SF"/>
</dbReference>
<dbReference type="InterPro" id="IPR014721">
    <property type="entry name" value="Ribsml_uS5_D2-typ_fold_subgr"/>
</dbReference>
<dbReference type="NCBIfam" id="TIGR00191">
    <property type="entry name" value="thrB"/>
    <property type="match status" value="1"/>
</dbReference>
<dbReference type="PANTHER" id="PTHR20861:SF1">
    <property type="entry name" value="HOMOSERINE KINASE"/>
    <property type="match status" value="1"/>
</dbReference>
<dbReference type="PANTHER" id="PTHR20861">
    <property type="entry name" value="HOMOSERINE/4-DIPHOSPHOCYTIDYL-2-C-METHYL-D-ERYTHRITOL KINASE"/>
    <property type="match status" value="1"/>
</dbReference>
<dbReference type="Pfam" id="PF08544">
    <property type="entry name" value="GHMP_kinases_C"/>
    <property type="match status" value="1"/>
</dbReference>
<dbReference type="Pfam" id="PF00288">
    <property type="entry name" value="GHMP_kinases_N"/>
    <property type="match status" value="1"/>
</dbReference>
<dbReference type="PIRSF" id="PIRSF000676">
    <property type="entry name" value="Homoser_kin"/>
    <property type="match status" value="1"/>
</dbReference>
<dbReference type="PRINTS" id="PR00958">
    <property type="entry name" value="HOMSERKINASE"/>
</dbReference>
<dbReference type="SUPFAM" id="SSF55060">
    <property type="entry name" value="GHMP Kinase, C-terminal domain"/>
    <property type="match status" value="1"/>
</dbReference>
<dbReference type="SUPFAM" id="SSF54211">
    <property type="entry name" value="Ribosomal protein S5 domain 2-like"/>
    <property type="match status" value="1"/>
</dbReference>
<dbReference type="PROSITE" id="PS00627">
    <property type="entry name" value="GHMP_KINASES_ATP"/>
    <property type="match status" value="1"/>
</dbReference>
<evidence type="ECO:0000255" key="1">
    <source>
        <dbReference type="HAMAP-Rule" id="MF_00384"/>
    </source>
</evidence>
<comment type="function">
    <text evidence="1">Catalyzes the ATP-dependent phosphorylation of L-homoserine to L-homoserine phosphate.</text>
</comment>
<comment type="catalytic activity">
    <reaction evidence="1">
        <text>L-homoserine + ATP = O-phospho-L-homoserine + ADP + H(+)</text>
        <dbReference type="Rhea" id="RHEA:13985"/>
        <dbReference type="ChEBI" id="CHEBI:15378"/>
        <dbReference type="ChEBI" id="CHEBI:30616"/>
        <dbReference type="ChEBI" id="CHEBI:57476"/>
        <dbReference type="ChEBI" id="CHEBI:57590"/>
        <dbReference type="ChEBI" id="CHEBI:456216"/>
        <dbReference type="EC" id="2.7.1.39"/>
    </reaction>
</comment>
<comment type="pathway">
    <text evidence="1">Amino-acid biosynthesis; L-threonine biosynthesis; L-threonine from L-aspartate: step 4/5.</text>
</comment>
<comment type="subcellular location">
    <subcellularLocation>
        <location evidence="1">Cytoplasm</location>
    </subcellularLocation>
</comment>
<comment type="similarity">
    <text evidence="1">Belongs to the GHMP kinase family. Homoserine kinase subfamily.</text>
</comment>
<feature type="chain" id="PRO_0000156609" description="Homoserine kinase">
    <location>
        <begin position="1"/>
        <end position="304"/>
    </location>
</feature>
<feature type="binding site" evidence="1">
    <location>
        <begin position="90"/>
        <end position="100"/>
    </location>
    <ligand>
        <name>ATP</name>
        <dbReference type="ChEBI" id="CHEBI:30616"/>
    </ligand>
</feature>
<gene>
    <name evidence="1" type="primary">thrB</name>
    <name type="ordered locus">MW1217</name>
</gene>
<proteinExistence type="inferred from homology"/>
<name>KHSE_STAAW</name>
<organism>
    <name type="scientific">Staphylococcus aureus (strain MW2)</name>
    <dbReference type="NCBI Taxonomy" id="196620"/>
    <lineage>
        <taxon>Bacteria</taxon>
        <taxon>Bacillati</taxon>
        <taxon>Bacillota</taxon>
        <taxon>Bacilli</taxon>
        <taxon>Bacillales</taxon>
        <taxon>Staphylococcaceae</taxon>
        <taxon>Staphylococcus</taxon>
    </lineage>
</organism>